<protein>
    <recommendedName>
        <fullName evidence="1">Large ribosomal subunit protein bL31</fullName>
    </recommendedName>
    <alternativeName>
        <fullName evidence="2">50S ribosomal protein L31</fullName>
    </alternativeName>
</protein>
<gene>
    <name evidence="1" type="primary">rpmE</name>
    <name type="ordered locus">THEYE_A0367</name>
</gene>
<keyword id="KW-0479">Metal-binding</keyword>
<keyword id="KW-1185">Reference proteome</keyword>
<keyword id="KW-0687">Ribonucleoprotein</keyword>
<keyword id="KW-0689">Ribosomal protein</keyword>
<keyword id="KW-0694">RNA-binding</keyword>
<keyword id="KW-0699">rRNA-binding</keyword>
<keyword id="KW-0862">Zinc</keyword>
<evidence type="ECO:0000255" key="1">
    <source>
        <dbReference type="HAMAP-Rule" id="MF_00501"/>
    </source>
</evidence>
<evidence type="ECO:0000305" key="2"/>
<reference key="1">
    <citation type="submission" date="2008-08" db="EMBL/GenBank/DDBJ databases">
        <title>The complete genome sequence of Thermodesulfovibrio yellowstonii strain ATCC 51303 / DSM 11347 / YP87.</title>
        <authorList>
            <person name="Dodson R.J."/>
            <person name="Durkin A.S."/>
            <person name="Wu M."/>
            <person name="Eisen J."/>
            <person name="Sutton G."/>
        </authorList>
    </citation>
    <scope>NUCLEOTIDE SEQUENCE [LARGE SCALE GENOMIC DNA]</scope>
    <source>
        <strain>ATCC 51303 / DSM 11347 / YP87</strain>
    </source>
</reference>
<accession>B5YIQ5</accession>
<dbReference type="EMBL" id="CP001147">
    <property type="protein sequence ID" value="ACI20423.1"/>
    <property type="molecule type" value="Genomic_DNA"/>
</dbReference>
<dbReference type="RefSeq" id="WP_012545159.1">
    <property type="nucleotide sequence ID" value="NC_011296.1"/>
</dbReference>
<dbReference type="RefSeq" id="YP_002248214.1">
    <property type="nucleotide sequence ID" value="NC_011296.1"/>
</dbReference>
<dbReference type="SMR" id="B5YIQ5"/>
<dbReference type="FunCoup" id="B5YIQ5">
    <property type="interactions" value="384"/>
</dbReference>
<dbReference type="STRING" id="289376.THEYE_A0367"/>
<dbReference type="EnsemblBacteria" id="ACI20423">
    <property type="protein sequence ID" value="ACI20423"/>
    <property type="gene ID" value="THEYE_A0367"/>
</dbReference>
<dbReference type="KEGG" id="tye:THEYE_A0367"/>
<dbReference type="PATRIC" id="fig|289376.4.peg.360"/>
<dbReference type="eggNOG" id="COG0254">
    <property type="taxonomic scope" value="Bacteria"/>
</dbReference>
<dbReference type="HOGENOM" id="CLU_114306_4_3_0"/>
<dbReference type="InParanoid" id="B5YIQ5"/>
<dbReference type="OrthoDB" id="9803251at2"/>
<dbReference type="Proteomes" id="UP000000718">
    <property type="component" value="Chromosome"/>
</dbReference>
<dbReference type="GO" id="GO:1990904">
    <property type="term" value="C:ribonucleoprotein complex"/>
    <property type="evidence" value="ECO:0007669"/>
    <property type="project" value="UniProtKB-KW"/>
</dbReference>
<dbReference type="GO" id="GO:0005840">
    <property type="term" value="C:ribosome"/>
    <property type="evidence" value="ECO:0007669"/>
    <property type="project" value="UniProtKB-KW"/>
</dbReference>
<dbReference type="GO" id="GO:0046872">
    <property type="term" value="F:metal ion binding"/>
    <property type="evidence" value="ECO:0007669"/>
    <property type="project" value="UniProtKB-KW"/>
</dbReference>
<dbReference type="GO" id="GO:0019843">
    <property type="term" value="F:rRNA binding"/>
    <property type="evidence" value="ECO:0007669"/>
    <property type="project" value="UniProtKB-KW"/>
</dbReference>
<dbReference type="GO" id="GO:0003735">
    <property type="term" value="F:structural constituent of ribosome"/>
    <property type="evidence" value="ECO:0007669"/>
    <property type="project" value="InterPro"/>
</dbReference>
<dbReference type="GO" id="GO:0006412">
    <property type="term" value="P:translation"/>
    <property type="evidence" value="ECO:0007669"/>
    <property type="project" value="UniProtKB-UniRule"/>
</dbReference>
<dbReference type="Gene3D" id="4.10.830.30">
    <property type="entry name" value="Ribosomal protein L31"/>
    <property type="match status" value="1"/>
</dbReference>
<dbReference type="HAMAP" id="MF_00501">
    <property type="entry name" value="Ribosomal_bL31_1"/>
    <property type="match status" value="1"/>
</dbReference>
<dbReference type="InterPro" id="IPR034704">
    <property type="entry name" value="Ribosomal_bL28/bL31-like_sf"/>
</dbReference>
<dbReference type="InterPro" id="IPR002150">
    <property type="entry name" value="Ribosomal_bL31"/>
</dbReference>
<dbReference type="InterPro" id="IPR027491">
    <property type="entry name" value="Ribosomal_bL31_A"/>
</dbReference>
<dbReference type="InterPro" id="IPR042105">
    <property type="entry name" value="Ribosomal_bL31_sf"/>
</dbReference>
<dbReference type="NCBIfam" id="TIGR00105">
    <property type="entry name" value="L31"/>
    <property type="match status" value="1"/>
</dbReference>
<dbReference type="NCBIfam" id="NF000612">
    <property type="entry name" value="PRK00019.1"/>
    <property type="match status" value="1"/>
</dbReference>
<dbReference type="NCBIfam" id="NF001809">
    <property type="entry name" value="PRK00528.1"/>
    <property type="match status" value="1"/>
</dbReference>
<dbReference type="PANTHER" id="PTHR33280">
    <property type="entry name" value="50S RIBOSOMAL PROTEIN L31, CHLOROPLASTIC"/>
    <property type="match status" value="1"/>
</dbReference>
<dbReference type="PANTHER" id="PTHR33280:SF1">
    <property type="entry name" value="LARGE RIBOSOMAL SUBUNIT PROTEIN BL31C"/>
    <property type="match status" value="1"/>
</dbReference>
<dbReference type="Pfam" id="PF01197">
    <property type="entry name" value="Ribosomal_L31"/>
    <property type="match status" value="1"/>
</dbReference>
<dbReference type="PRINTS" id="PR01249">
    <property type="entry name" value="RIBOSOMALL31"/>
</dbReference>
<dbReference type="SUPFAM" id="SSF143800">
    <property type="entry name" value="L28p-like"/>
    <property type="match status" value="1"/>
</dbReference>
<dbReference type="PROSITE" id="PS01143">
    <property type="entry name" value="RIBOSOMAL_L31"/>
    <property type="match status" value="1"/>
</dbReference>
<sequence>MKEKIHPEYKEAKVVCACGETFVTRSTKPVIKVDICSKCHPFYTGKQKIVDTEGRVEKFMKKYSKK</sequence>
<proteinExistence type="inferred from homology"/>
<name>RL31_THEYD</name>
<organism>
    <name type="scientific">Thermodesulfovibrio yellowstonii (strain ATCC 51303 / DSM 11347 / YP87)</name>
    <dbReference type="NCBI Taxonomy" id="289376"/>
    <lineage>
        <taxon>Bacteria</taxon>
        <taxon>Pseudomonadati</taxon>
        <taxon>Nitrospirota</taxon>
        <taxon>Thermodesulfovibrionia</taxon>
        <taxon>Thermodesulfovibrionales</taxon>
        <taxon>Thermodesulfovibrionaceae</taxon>
        <taxon>Thermodesulfovibrio</taxon>
    </lineage>
</organism>
<feature type="chain" id="PRO_1000126760" description="Large ribosomal subunit protein bL31">
    <location>
        <begin position="1"/>
        <end position="66"/>
    </location>
</feature>
<feature type="binding site" evidence="1">
    <location>
        <position position="16"/>
    </location>
    <ligand>
        <name>Zn(2+)</name>
        <dbReference type="ChEBI" id="CHEBI:29105"/>
    </ligand>
</feature>
<feature type="binding site" evidence="1">
    <location>
        <position position="18"/>
    </location>
    <ligand>
        <name>Zn(2+)</name>
        <dbReference type="ChEBI" id="CHEBI:29105"/>
    </ligand>
</feature>
<feature type="binding site" evidence="1">
    <location>
        <position position="36"/>
    </location>
    <ligand>
        <name>Zn(2+)</name>
        <dbReference type="ChEBI" id="CHEBI:29105"/>
    </ligand>
</feature>
<feature type="binding site" evidence="1">
    <location>
        <position position="39"/>
    </location>
    <ligand>
        <name>Zn(2+)</name>
        <dbReference type="ChEBI" id="CHEBI:29105"/>
    </ligand>
</feature>
<comment type="function">
    <text evidence="1">Binds the 23S rRNA.</text>
</comment>
<comment type="cofactor">
    <cofactor evidence="1">
        <name>Zn(2+)</name>
        <dbReference type="ChEBI" id="CHEBI:29105"/>
    </cofactor>
    <text evidence="1">Binds 1 zinc ion per subunit.</text>
</comment>
<comment type="subunit">
    <text evidence="1">Part of the 50S ribosomal subunit.</text>
</comment>
<comment type="similarity">
    <text evidence="1">Belongs to the bacterial ribosomal protein bL31 family. Type A subfamily.</text>
</comment>